<reference key="1">
    <citation type="journal article" date="2009" name="Genome Res.">
        <title>Newly introduced genomic prophage islands are critical determinants of in vivo competitiveness in the Liverpool epidemic strain of Pseudomonas aeruginosa.</title>
        <authorList>
            <person name="Winstanley C."/>
            <person name="Langille M.G.I."/>
            <person name="Fothergill J.L."/>
            <person name="Kukavica-Ibrulj I."/>
            <person name="Paradis-Bleau C."/>
            <person name="Sanschagrin F."/>
            <person name="Thomson N.R."/>
            <person name="Winsor G.L."/>
            <person name="Quail M.A."/>
            <person name="Lennard N."/>
            <person name="Bignell A."/>
            <person name="Clarke L."/>
            <person name="Seeger K."/>
            <person name="Saunders D."/>
            <person name="Harris D."/>
            <person name="Parkhill J."/>
            <person name="Hancock R.E.W."/>
            <person name="Brinkman F.S.L."/>
            <person name="Levesque R.C."/>
        </authorList>
    </citation>
    <scope>NUCLEOTIDE SEQUENCE [LARGE SCALE GENOMIC DNA]</scope>
    <source>
        <strain>LESB58</strain>
    </source>
</reference>
<keyword id="KW-0963">Cytoplasm</keyword>
<keyword id="KW-0227">DNA damage</keyword>
<keyword id="KW-0228">DNA excision</keyword>
<keyword id="KW-0234">DNA repair</keyword>
<keyword id="KW-0267">Excision nuclease</keyword>
<keyword id="KW-0742">SOS response</keyword>
<dbReference type="EMBL" id="FM209186">
    <property type="protein sequence ID" value="CAW27329.1"/>
    <property type="molecule type" value="Genomic_DNA"/>
</dbReference>
<dbReference type="RefSeq" id="WP_003097551.1">
    <property type="nucleotide sequence ID" value="NC_011770.1"/>
</dbReference>
<dbReference type="SMR" id="B7V4X6"/>
<dbReference type="KEGG" id="pag:PLES_26031"/>
<dbReference type="HOGENOM" id="CLU_014841_3_0_6"/>
<dbReference type="GO" id="GO:0005737">
    <property type="term" value="C:cytoplasm"/>
    <property type="evidence" value="ECO:0007669"/>
    <property type="project" value="UniProtKB-SubCell"/>
</dbReference>
<dbReference type="GO" id="GO:0009380">
    <property type="term" value="C:excinuclease repair complex"/>
    <property type="evidence" value="ECO:0007669"/>
    <property type="project" value="InterPro"/>
</dbReference>
<dbReference type="GO" id="GO:0003677">
    <property type="term" value="F:DNA binding"/>
    <property type="evidence" value="ECO:0007669"/>
    <property type="project" value="UniProtKB-UniRule"/>
</dbReference>
<dbReference type="GO" id="GO:0009381">
    <property type="term" value="F:excinuclease ABC activity"/>
    <property type="evidence" value="ECO:0007669"/>
    <property type="project" value="UniProtKB-UniRule"/>
</dbReference>
<dbReference type="GO" id="GO:0006289">
    <property type="term" value="P:nucleotide-excision repair"/>
    <property type="evidence" value="ECO:0007669"/>
    <property type="project" value="UniProtKB-UniRule"/>
</dbReference>
<dbReference type="GO" id="GO:0009432">
    <property type="term" value="P:SOS response"/>
    <property type="evidence" value="ECO:0007669"/>
    <property type="project" value="UniProtKB-UniRule"/>
</dbReference>
<dbReference type="CDD" id="cd10434">
    <property type="entry name" value="GIY-YIG_UvrC_Cho"/>
    <property type="match status" value="1"/>
</dbReference>
<dbReference type="FunFam" id="1.10.150.20:FF:000005">
    <property type="entry name" value="UvrABC system protein C"/>
    <property type="match status" value="1"/>
</dbReference>
<dbReference type="FunFam" id="3.30.420.340:FF:000001">
    <property type="entry name" value="UvrABC system protein C"/>
    <property type="match status" value="1"/>
</dbReference>
<dbReference type="FunFam" id="3.40.1440.10:FF:000001">
    <property type="entry name" value="UvrABC system protein C"/>
    <property type="match status" value="1"/>
</dbReference>
<dbReference type="Gene3D" id="1.10.150.20">
    <property type="entry name" value="5' to 3' exonuclease, C-terminal subdomain"/>
    <property type="match status" value="1"/>
</dbReference>
<dbReference type="Gene3D" id="3.40.1440.10">
    <property type="entry name" value="GIY-YIG endonuclease"/>
    <property type="match status" value="1"/>
</dbReference>
<dbReference type="Gene3D" id="4.10.860.10">
    <property type="entry name" value="UVR domain"/>
    <property type="match status" value="1"/>
</dbReference>
<dbReference type="Gene3D" id="3.30.420.340">
    <property type="entry name" value="UvrC, RNAse H endonuclease domain"/>
    <property type="match status" value="1"/>
</dbReference>
<dbReference type="HAMAP" id="MF_00203">
    <property type="entry name" value="UvrC"/>
    <property type="match status" value="1"/>
</dbReference>
<dbReference type="InterPro" id="IPR000305">
    <property type="entry name" value="GIY-YIG_endonuc"/>
</dbReference>
<dbReference type="InterPro" id="IPR035901">
    <property type="entry name" value="GIY-YIG_endonuc_sf"/>
</dbReference>
<dbReference type="InterPro" id="IPR047296">
    <property type="entry name" value="GIY-YIG_UvrC_Cho"/>
</dbReference>
<dbReference type="InterPro" id="IPR003583">
    <property type="entry name" value="Hlx-hairpin-Hlx_DNA-bd_motif"/>
</dbReference>
<dbReference type="InterPro" id="IPR010994">
    <property type="entry name" value="RuvA_2-like"/>
</dbReference>
<dbReference type="InterPro" id="IPR001943">
    <property type="entry name" value="UVR_dom"/>
</dbReference>
<dbReference type="InterPro" id="IPR036876">
    <property type="entry name" value="UVR_dom_sf"/>
</dbReference>
<dbReference type="InterPro" id="IPR050066">
    <property type="entry name" value="UvrABC_protein_C"/>
</dbReference>
<dbReference type="InterPro" id="IPR004791">
    <property type="entry name" value="UvrC"/>
</dbReference>
<dbReference type="InterPro" id="IPR001162">
    <property type="entry name" value="UvrC_RNase_H_dom"/>
</dbReference>
<dbReference type="InterPro" id="IPR038476">
    <property type="entry name" value="UvrC_RNase_H_dom_sf"/>
</dbReference>
<dbReference type="NCBIfam" id="NF001824">
    <property type="entry name" value="PRK00558.1-5"/>
    <property type="match status" value="1"/>
</dbReference>
<dbReference type="NCBIfam" id="TIGR00194">
    <property type="entry name" value="uvrC"/>
    <property type="match status" value="1"/>
</dbReference>
<dbReference type="PANTHER" id="PTHR30562:SF1">
    <property type="entry name" value="UVRABC SYSTEM PROTEIN C"/>
    <property type="match status" value="1"/>
</dbReference>
<dbReference type="PANTHER" id="PTHR30562">
    <property type="entry name" value="UVRC/OXIDOREDUCTASE"/>
    <property type="match status" value="1"/>
</dbReference>
<dbReference type="Pfam" id="PF01541">
    <property type="entry name" value="GIY-YIG"/>
    <property type="match status" value="1"/>
</dbReference>
<dbReference type="Pfam" id="PF14520">
    <property type="entry name" value="HHH_5"/>
    <property type="match status" value="1"/>
</dbReference>
<dbReference type="Pfam" id="PF02151">
    <property type="entry name" value="UVR"/>
    <property type="match status" value="1"/>
</dbReference>
<dbReference type="Pfam" id="PF22920">
    <property type="entry name" value="UvrC_RNaseH"/>
    <property type="match status" value="1"/>
</dbReference>
<dbReference type="Pfam" id="PF08459">
    <property type="entry name" value="UvrC_RNaseH_dom"/>
    <property type="match status" value="1"/>
</dbReference>
<dbReference type="SMART" id="SM00465">
    <property type="entry name" value="GIYc"/>
    <property type="match status" value="1"/>
</dbReference>
<dbReference type="SMART" id="SM00278">
    <property type="entry name" value="HhH1"/>
    <property type="match status" value="2"/>
</dbReference>
<dbReference type="SUPFAM" id="SSF46600">
    <property type="entry name" value="C-terminal UvrC-binding domain of UvrB"/>
    <property type="match status" value="1"/>
</dbReference>
<dbReference type="SUPFAM" id="SSF82771">
    <property type="entry name" value="GIY-YIG endonuclease"/>
    <property type="match status" value="1"/>
</dbReference>
<dbReference type="SUPFAM" id="SSF47781">
    <property type="entry name" value="RuvA domain 2-like"/>
    <property type="match status" value="1"/>
</dbReference>
<dbReference type="PROSITE" id="PS50164">
    <property type="entry name" value="GIY_YIG"/>
    <property type="match status" value="1"/>
</dbReference>
<dbReference type="PROSITE" id="PS50151">
    <property type="entry name" value="UVR"/>
    <property type="match status" value="1"/>
</dbReference>
<dbReference type="PROSITE" id="PS50165">
    <property type="entry name" value="UVRC"/>
    <property type="match status" value="1"/>
</dbReference>
<proteinExistence type="inferred from homology"/>
<accession>B7V4X6</accession>
<comment type="function">
    <text evidence="1">The UvrABC repair system catalyzes the recognition and processing of DNA lesions. UvrC both incises the 5' and 3' sides of the lesion. The N-terminal half is responsible for the 3' incision and the C-terminal half is responsible for the 5' incision.</text>
</comment>
<comment type="subunit">
    <text evidence="1">Interacts with UvrB in an incision complex.</text>
</comment>
<comment type="subcellular location">
    <subcellularLocation>
        <location evidence="1">Cytoplasm</location>
    </subcellularLocation>
</comment>
<comment type="similarity">
    <text evidence="1">Belongs to the UvrC family.</text>
</comment>
<gene>
    <name evidence="1" type="primary">uvrC</name>
    <name type="ordered locus">PLES_26031</name>
</gene>
<evidence type="ECO:0000255" key="1">
    <source>
        <dbReference type="HAMAP-Rule" id="MF_00203"/>
    </source>
</evidence>
<sequence length="608" mass="67338">MSAVFDASAFLATCSNRPGVYRMFDADAKLLYVGKAKSLKKRLASYFRKSGLAPKTAALVARIAQVETTITANETEALLLEQTLIKEWRPPYNILLRDDKSYPFVFLSSEDEYPRLSLHRGAKKRKGRYFGPYPSAGAIRESLNLLQKAFLVRQCEDSYFRNRTRPCLQYQIKRCKGPCVGLVSPEEYAEDVRHSVMFLEGRSNALADELNVGMEQAAMRLDFEKAAELRDQVAILRRVQDQQSMEGGNGDVDIVAAIVTPGGACVHLISVRGGRVLGSKNFFPQVAIEEEVGEVLLAFLGQYYLSHQERDLPAELIVNVTHEDFPVLVSAIAEARGRELEISYRVRGTRARWQQLAVTNAEQALGARLANRQHVAARFEALAEALDLAEPPQRLECFDISHSSGEATVASCVVFGPEGPLKSDYRRYNIEGVTAGDDYAAMHQALTRRFSRLKDGEGKMPDILLVDGGKGQLAMAQEVLQELAVAGLILLGVAKGVTRKPGLETLYLNDASHEFTLPADSPALHLIQQIRDEAHRFAITGHRARRGKARRTSTLEDVPGVGPKRRRDLLKHFGGLQELSRASIDELAKAPGISKKLAEQIYAVLHSE</sequence>
<protein>
    <recommendedName>
        <fullName evidence="1">UvrABC system protein C</fullName>
        <shortName evidence="1">Protein UvrC</shortName>
    </recommendedName>
    <alternativeName>
        <fullName evidence="1">Excinuclease ABC subunit C</fullName>
    </alternativeName>
</protein>
<name>UVRC_PSEA8</name>
<organism>
    <name type="scientific">Pseudomonas aeruginosa (strain LESB58)</name>
    <dbReference type="NCBI Taxonomy" id="557722"/>
    <lineage>
        <taxon>Bacteria</taxon>
        <taxon>Pseudomonadati</taxon>
        <taxon>Pseudomonadota</taxon>
        <taxon>Gammaproteobacteria</taxon>
        <taxon>Pseudomonadales</taxon>
        <taxon>Pseudomonadaceae</taxon>
        <taxon>Pseudomonas</taxon>
    </lineage>
</organism>
<feature type="chain" id="PRO_1000200596" description="UvrABC system protein C">
    <location>
        <begin position="1"/>
        <end position="608"/>
    </location>
</feature>
<feature type="domain" description="GIY-YIG" evidence="1">
    <location>
        <begin position="16"/>
        <end position="94"/>
    </location>
</feature>
<feature type="domain" description="UVR" evidence="1">
    <location>
        <begin position="204"/>
        <end position="239"/>
    </location>
</feature>